<name>LEPA_HAMD5</name>
<gene>
    <name evidence="1" type="primary">lepA</name>
    <name type="ordered locus">HDEF_0530</name>
</gene>
<reference key="1">
    <citation type="journal article" date="2009" name="Proc. Natl. Acad. Sci. U.S.A.">
        <title>Hamiltonella defensa, genome evolution of protective bacterial endosymbiont from pathogenic ancestors.</title>
        <authorList>
            <person name="Degnan P.H."/>
            <person name="Yu Y."/>
            <person name="Sisneros N."/>
            <person name="Wing R.A."/>
            <person name="Moran N.A."/>
        </authorList>
    </citation>
    <scope>NUCLEOTIDE SEQUENCE [LARGE SCALE GENOMIC DNA]</scope>
    <source>
        <strain>5AT</strain>
    </source>
</reference>
<proteinExistence type="inferred from homology"/>
<organism>
    <name type="scientific">Hamiltonella defensa subsp. Acyrthosiphon pisum (strain 5AT)</name>
    <dbReference type="NCBI Taxonomy" id="572265"/>
    <lineage>
        <taxon>Bacteria</taxon>
        <taxon>Pseudomonadati</taxon>
        <taxon>Pseudomonadota</taxon>
        <taxon>Gammaproteobacteria</taxon>
        <taxon>Enterobacterales</taxon>
        <taxon>Enterobacteriaceae</taxon>
        <taxon>aphid secondary symbionts</taxon>
        <taxon>Candidatus Hamiltonella</taxon>
    </lineage>
</organism>
<keyword id="KW-1003">Cell membrane</keyword>
<keyword id="KW-0342">GTP-binding</keyword>
<keyword id="KW-0378">Hydrolase</keyword>
<keyword id="KW-0472">Membrane</keyword>
<keyword id="KW-0547">Nucleotide-binding</keyword>
<keyword id="KW-0648">Protein biosynthesis</keyword>
<protein>
    <recommendedName>
        <fullName evidence="1">Elongation factor 4</fullName>
        <shortName evidence="1">EF-4</shortName>
        <ecNumber evidence="1">3.6.5.n1</ecNumber>
    </recommendedName>
    <alternativeName>
        <fullName evidence="1">Ribosomal back-translocase LepA</fullName>
    </alternativeName>
</protein>
<dbReference type="EC" id="3.6.5.n1" evidence="1"/>
<dbReference type="EMBL" id="CP001277">
    <property type="protein sequence ID" value="ACQ67284.1"/>
    <property type="molecule type" value="Genomic_DNA"/>
</dbReference>
<dbReference type="RefSeq" id="WP_015873109.1">
    <property type="nucleotide sequence ID" value="NC_012751.1"/>
</dbReference>
<dbReference type="SMR" id="C4K3Z1"/>
<dbReference type="STRING" id="572265.HDEF_0530"/>
<dbReference type="GeneID" id="66260412"/>
<dbReference type="KEGG" id="hde:HDEF_0530"/>
<dbReference type="eggNOG" id="COG0481">
    <property type="taxonomic scope" value="Bacteria"/>
</dbReference>
<dbReference type="HOGENOM" id="CLU_009995_3_3_6"/>
<dbReference type="Proteomes" id="UP000002334">
    <property type="component" value="Chromosome"/>
</dbReference>
<dbReference type="GO" id="GO:0005886">
    <property type="term" value="C:plasma membrane"/>
    <property type="evidence" value="ECO:0007669"/>
    <property type="project" value="UniProtKB-SubCell"/>
</dbReference>
<dbReference type="GO" id="GO:0005525">
    <property type="term" value="F:GTP binding"/>
    <property type="evidence" value="ECO:0007669"/>
    <property type="project" value="UniProtKB-UniRule"/>
</dbReference>
<dbReference type="GO" id="GO:0003924">
    <property type="term" value="F:GTPase activity"/>
    <property type="evidence" value="ECO:0007669"/>
    <property type="project" value="UniProtKB-UniRule"/>
</dbReference>
<dbReference type="GO" id="GO:0097216">
    <property type="term" value="F:guanosine tetraphosphate binding"/>
    <property type="evidence" value="ECO:0007669"/>
    <property type="project" value="UniProtKB-ARBA"/>
</dbReference>
<dbReference type="GO" id="GO:0043022">
    <property type="term" value="F:ribosome binding"/>
    <property type="evidence" value="ECO:0007669"/>
    <property type="project" value="UniProtKB-UniRule"/>
</dbReference>
<dbReference type="GO" id="GO:0003746">
    <property type="term" value="F:translation elongation factor activity"/>
    <property type="evidence" value="ECO:0007669"/>
    <property type="project" value="UniProtKB-UniRule"/>
</dbReference>
<dbReference type="GO" id="GO:0045727">
    <property type="term" value="P:positive regulation of translation"/>
    <property type="evidence" value="ECO:0007669"/>
    <property type="project" value="UniProtKB-UniRule"/>
</dbReference>
<dbReference type="CDD" id="cd03699">
    <property type="entry name" value="EF4_II"/>
    <property type="match status" value="1"/>
</dbReference>
<dbReference type="CDD" id="cd16260">
    <property type="entry name" value="EF4_III"/>
    <property type="match status" value="1"/>
</dbReference>
<dbReference type="CDD" id="cd01890">
    <property type="entry name" value="LepA"/>
    <property type="match status" value="1"/>
</dbReference>
<dbReference type="CDD" id="cd03709">
    <property type="entry name" value="lepA_C"/>
    <property type="match status" value="1"/>
</dbReference>
<dbReference type="FunFam" id="3.30.70.240:FF:000005">
    <property type="entry name" value="Elongation factor 4"/>
    <property type="match status" value="1"/>
</dbReference>
<dbReference type="FunFam" id="3.40.50.300:FF:000078">
    <property type="entry name" value="Elongation factor 4"/>
    <property type="match status" value="1"/>
</dbReference>
<dbReference type="FunFam" id="2.40.30.10:FF:000015">
    <property type="entry name" value="Translation factor GUF1, mitochondrial"/>
    <property type="match status" value="1"/>
</dbReference>
<dbReference type="FunFam" id="3.30.70.2570:FF:000001">
    <property type="entry name" value="Translation factor GUF1, mitochondrial"/>
    <property type="match status" value="1"/>
</dbReference>
<dbReference type="FunFam" id="3.30.70.870:FF:000004">
    <property type="entry name" value="Translation factor GUF1, mitochondrial"/>
    <property type="match status" value="1"/>
</dbReference>
<dbReference type="Gene3D" id="3.30.70.240">
    <property type="match status" value="1"/>
</dbReference>
<dbReference type="Gene3D" id="3.30.70.2570">
    <property type="entry name" value="Elongation factor 4, C-terminal domain"/>
    <property type="match status" value="1"/>
</dbReference>
<dbReference type="Gene3D" id="3.30.70.870">
    <property type="entry name" value="Elongation Factor G (Translational Gtpase), domain 3"/>
    <property type="match status" value="1"/>
</dbReference>
<dbReference type="Gene3D" id="3.40.50.300">
    <property type="entry name" value="P-loop containing nucleotide triphosphate hydrolases"/>
    <property type="match status" value="1"/>
</dbReference>
<dbReference type="Gene3D" id="2.40.30.10">
    <property type="entry name" value="Translation factors"/>
    <property type="match status" value="1"/>
</dbReference>
<dbReference type="HAMAP" id="MF_00071">
    <property type="entry name" value="LepA"/>
    <property type="match status" value="1"/>
</dbReference>
<dbReference type="InterPro" id="IPR006297">
    <property type="entry name" value="EF-4"/>
</dbReference>
<dbReference type="InterPro" id="IPR035647">
    <property type="entry name" value="EFG_III/V"/>
</dbReference>
<dbReference type="InterPro" id="IPR000640">
    <property type="entry name" value="EFG_V-like"/>
</dbReference>
<dbReference type="InterPro" id="IPR004161">
    <property type="entry name" value="EFTu-like_2"/>
</dbReference>
<dbReference type="InterPro" id="IPR031157">
    <property type="entry name" value="G_TR_CS"/>
</dbReference>
<dbReference type="InterPro" id="IPR038363">
    <property type="entry name" value="LepA_C_sf"/>
</dbReference>
<dbReference type="InterPro" id="IPR013842">
    <property type="entry name" value="LepA_CTD"/>
</dbReference>
<dbReference type="InterPro" id="IPR035654">
    <property type="entry name" value="LepA_IV"/>
</dbReference>
<dbReference type="InterPro" id="IPR027417">
    <property type="entry name" value="P-loop_NTPase"/>
</dbReference>
<dbReference type="InterPro" id="IPR005225">
    <property type="entry name" value="Small_GTP-bd"/>
</dbReference>
<dbReference type="InterPro" id="IPR000795">
    <property type="entry name" value="T_Tr_GTP-bd_dom"/>
</dbReference>
<dbReference type="NCBIfam" id="TIGR01393">
    <property type="entry name" value="lepA"/>
    <property type="match status" value="1"/>
</dbReference>
<dbReference type="NCBIfam" id="TIGR00231">
    <property type="entry name" value="small_GTP"/>
    <property type="match status" value="1"/>
</dbReference>
<dbReference type="PANTHER" id="PTHR43512:SF4">
    <property type="entry name" value="TRANSLATION FACTOR GUF1 HOMOLOG, CHLOROPLASTIC"/>
    <property type="match status" value="1"/>
</dbReference>
<dbReference type="PANTHER" id="PTHR43512">
    <property type="entry name" value="TRANSLATION FACTOR GUF1-RELATED"/>
    <property type="match status" value="1"/>
</dbReference>
<dbReference type="Pfam" id="PF00679">
    <property type="entry name" value="EFG_C"/>
    <property type="match status" value="1"/>
</dbReference>
<dbReference type="Pfam" id="PF00009">
    <property type="entry name" value="GTP_EFTU"/>
    <property type="match status" value="1"/>
</dbReference>
<dbReference type="Pfam" id="PF03144">
    <property type="entry name" value="GTP_EFTU_D2"/>
    <property type="match status" value="1"/>
</dbReference>
<dbReference type="Pfam" id="PF06421">
    <property type="entry name" value="LepA_C"/>
    <property type="match status" value="1"/>
</dbReference>
<dbReference type="PRINTS" id="PR00315">
    <property type="entry name" value="ELONGATNFCT"/>
</dbReference>
<dbReference type="SUPFAM" id="SSF54980">
    <property type="entry name" value="EF-G C-terminal domain-like"/>
    <property type="match status" value="2"/>
</dbReference>
<dbReference type="SUPFAM" id="SSF52540">
    <property type="entry name" value="P-loop containing nucleoside triphosphate hydrolases"/>
    <property type="match status" value="1"/>
</dbReference>
<dbReference type="PROSITE" id="PS00301">
    <property type="entry name" value="G_TR_1"/>
    <property type="match status" value="1"/>
</dbReference>
<dbReference type="PROSITE" id="PS51722">
    <property type="entry name" value="G_TR_2"/>
    <property type="match status" value="1"/>
</dbReference>
<feature type="chain" id="PRO_1000202453" description="Elongation factor 4">
    <location>
        <begin position="1"/>
        <end position="599"/>
    </location>
</feature>
<feature type="domain" description="tr-type G">
    <location>
        <begin position="2"/>
        <end position="184"/>
    </location>
</feature>
<feature type="binding site" evidence="1">
    <location>
        <begin position="14"/>
        <end position="19"/>
    </location>
    <ligand>
        <name>GTP</name>
        <dbReference type="ChEBI" id="CHEBI:37565"/>
    </ligand>
</feature>
<feature type="binding site" evidence="1">
    <location>
        <begin position="131"/>
        <end position="134"/>
    </location>
    <ligand>
        <name>GTP</name>
        <dbReference type="ChEBI" id="CHEBI:37565"/>
    </ligand>
</feature>
<evidence type="ECO:0000255" key="1">
    <source>
        <dbReference type="HAMAP-Rule" id="MF_00071"/>
    </source>
</evidence>
<sequence length="599" mass="66792">MNYKRNFSIIAHIDHGKSTLSDRIIQLCGGLTEREMASQVLDSMDLERERGITIKAQSVTLYYQAQDGNTYQLNFIDTPGHVDFSYEVSRSLAACEGALLVVDAAQGVEAQTLANCYTALEMNLEVVPVLNKIDLPASDPDRIAEEIEDIVGIDATDAVRCSAKTGIGIADVLERLVRDIPAPKGDPKGTLQALIIDSWFDNYLGVVSLIRLKNGTLRKGDKVKVMSTGQIYNVERLGIFTPKRFDTDILNCGEVGWLVCAIKDILGAPVGDTLTLSRHPAEKPLPGFKKVKPQVYAGLFPISSDDYESFRDALAKLSLNDASLFFEPENSGALGFGFRCGFLGLLHMEIVQERLEREYHLDLITTAPTVVYEVKTVKKEILYVDSPSKLPALSEIEELREPIAECHILLPQEYLGNVMTLCVAKRGVQVNMVYHGHQVALTYHIPMAEVVLDFFDRLKSTSRGYASLDYNFKRFQASDMVRVDILLNTERVDALALITHRDNAASRGRELVEKMKDFIPRQQFDIAIQAAIGHHIIARATVKQLRKNVLAKCYGGDVSRKKKLLQKQKEGKKRMKRVGNVELPQDAFLAILHIGKESK</sequence>
<comment type="function">
    <text evidence="1">Required for accurate and efficient protein synthesis under certain stress conditions. May act as a fidelity factor of the translation reaction, by catalyzing a one-codon backward translocation of tRNAs on improperly translocated ribosomes. Back-translocation proceeds from a post-translocation (POST) complex to a pre-translocation (PRE) complex, thus giving elongation factor G a second chance to translocate the tRNAs correctly. Binds to ribosomes in a GTP-dependent manner.</text>
</comment>
<comment type="catalytic activity">
    <reaction evidence="1">
        <text>GTP + H2O = GDP + phosphate + H(+)</text>
        <dbReference type="Rhea" id="RHEA:19669"/>
        <dbReference type="ChEBI" id="CHEBI:15377"/>
        <dbReference type="ChEBI" id="CHEBI:15378"/>
        <dbReference type="ChEBI" id="CHEBI:37565"/>
        <dbReference type="ChEBI" id="CHEBI:43474"/>
        <dbReference type="ChEBI" id="CHEBI:58189"/>
        <dbReference type="EC" id="3.6.5.n1"/>
    </reaction>
</comment>
<comment type="subcellular location">
    <subcellularLocation>
        <location evidence="1">Cell membrane</location>
        <topology evidence="1">Peripheral membrane protein</topology>
        <orientation evidence="1">Cytoplasmic side</orientation>
    </subcellularLocation>
</comment>
<comment type="similarity">
    <text evidence="1">Belongs to the TRAFAC class translation factor GTPase superfamily. Classic translation factor GTPase family. LepA subfamily.</text>
</comment>
<accession>C4K3Z1</accession>